<proteinExistence type="evidence at protein level"/>
<dbReference type="EMBL" id="Y09394">
    <property type="protein sequence ID" value="CAA70563.1"/>
    <property type="molecule type" value="mRNA"/>
</dbReference>
<dbReference type="GO" id="GO:0005576">
    <property type="term" value="C:extracellular region"/>
    <property type="evidence" value="ECO:0000314"/>
    <property type="project" value="UniProtKB"/>
</dbReference>
<dbReference type="GO" id="GO:0042742">
    <property type="term" value="P:defense response to bacterium"/>
    <property type="evidence" value="ECO:0007669"/>
    <property type="project" value="UniProtKB-KW"/>
</dbReference>
<dbReference type="GO" id="GO:0045087">
    <property type="term" value="P:innate immune response"/>
    <property type="evidence" value="ECO:0007669"/>
    <property type="project" value="UniProtKB-KW"/>
</dbReference>
<dbReference type="InterPro" id="IPR004275">
    <property type="entry name" value="Frog_antimicrobial_propeptide"/>
</dbReference>
<dbReference type="Pfam" id="PF03032">
    <property type="entry name" value="FSAP_sig_propep"/>
    <property type="match status" value="1"/>
</dbReference>
<keyword id="KW-0027">Amidation</keyword>
<keyword id="KW-0878">Amphibian defense peptide</keyword>
<keyword id="KW-0044">Antibiotic</keyword>
<keyword id="KW-0929">Antimicrobial</keyword>
<keyword id="KW-0165">Cleavage on pair of basic residues</keyword>
<keyword id="KW-0903">Direct protein sequencing</keyword>
<keyword id="KW-0391">Immunity</keyword>
<keyword id="KW-0399">Innate immunity</keyword>
<keyword id="KW-0964">Secreted</keyword>
<keyword id="KW-0732">Signal</keyword>
<organism>
    <name type="scientific">Rana temporaria</name>
    <name type="common">European common frog</name>
    <dbReference type="NCBI Taxonomy" id="8407"/>
    <lineage>
        <taxon>Eukaryota</taxon>
        <taxon>Metazoa</taxon>
        <taxon>Chordata</taxon>
        <taxon>Craniata</taxon>
        <taxon>Vertebrata</taxon>
        <taxon>Euteleostomi</taxon>
        <taxon>Amphibia</taxon>
        <taxon>Batrachia</taxon>
        <taxon>Anura</taxon>
        <taxon>Neobatrachia</taxon>
        <taxon>Ranoidea</taxon>
        <taxon>Ranidae</taxon>
        <taxon>Rana</taxon>
        <taxon>Rana</taxon>
    </lineage>
</organism>
<sequence>MFTLKKSLLLLFFLGTINLSLCEEERNAEEERRDEPDERDVQVEKRLSPNLLKSLLGK</sequence>
<comment type="function">
    <text evidence="4">Antimicrobial peptide that renders both the outer and inner membrane of bacteria permeable to hydrophobic substances of low molecular mass.</text>
</comment>
<comment type="subcellular location">
    <subcellularLocation>
        <location evidence="5 6">Secreted</location>
    </subcellularLocation>
</comment>
<comment type="tissue specificity">
    <text evidence="10 11">Expressed by the skin glands.</text>
</comment>
<comment type="mass spectrometry"/>
<comment type="similarity">
    <text evidence="9">Belongs to the frog skin active peptide (FSAP) family. Temporin subfamily.</text>
</comment>
<comment type="online information" name="The antimicrobial peptide database">
    <link uri="https://wangapd3.com/database/query_output.php?ID=00859"/>
</comment>
<name>TPH_RANTE</name>
<feature type="signal peptide" evidence="2">
    <location>
        <begin position="1"/>
        <end position="22"/>
    </location>
</feature>
<feature type="propeptide" id="PRO_0000003475" evidence="11">
    <location>
        <begin position="23"/>
        <end position="46"/>
    </location>
</feature>
<feature type="peptide" id="PRO_0000003476" description="Temporin-1Th" evidence="6">
    <location>
        <begin position="47"/>
        <end position="56"/>
    </location>
</feature>
<feature type="region of interest" description="Disordered" evidence="3">
    <location>
        <begin position="25"/>
        <end position="46"/>
    </location>
</feature>
<feature type="modified residue" description="Leucine amide" evidence="6">
    <location>
        <position position="56"/>
    </location>
</feature>
<reference key="1">
    <citation type="journal article" date="1996" name="Eur. J. Biochem.">
        <title>Temporins, antimicrobial peptides from the European red frog Rana temporaria.</title>
        <authorList>
            <person name="Simmaco M."/>
            <person name="Mignogna G."/>
            <person name="Canofeni S."/>
            <person name="Miele R."/>
            <person name="Mangoni M.L."/>
            <person name="Barra D."/>
        </authorList>
    </citation>
    <scope>NUCLEOTIDE SEQUENCE [MRNA]</scope>
    <scope>PROTEIN SEQUENCE OF 47-56</scope>
    <scope>AMIDATION AT LEU-56</scope>
    <scope>SYNTHESIS OF 47-56</scope>
    <scope>SUBCELLULAR LOCATION</scope>
    <source>
        <tissue>Skin</tissue>
        <tissue>Skin secretion</tissue>
    </source>
</reference>
<reference key="2">
    <citation type="journal article" date="2021" name="Anal. Bioanal. Chem.">
        <title>Differentiation of Central Slovenian and Moscow populations of Rana temporaria frogs using peptide biomarkers of temporins family.</title>
        <authorList>
            <person name="Samgina T.Y."/>
            <person name="Vasileva I.D."/>
            <person name="Kovalev S.V."/>
            <person name="Trebse P."/>
            <person name="Torkar G."/>
            <person name="Surin A.K."/>
            <person name="Zubarev R.A."/>
            <person name="Lebedev A.T."/>
        </authorList>
    </citation>
    <scope>PROTEIN SEQUENCE OF 47-56</scope>
    <scope>IDENTIFICATION BY MASS SPECTROMETRY</scope>
    <scope>SUBCELLULAR LOCATION</scope>
    <scope>AMIDATION AT LEU-56</scope>
    <source>
        <tissue evidence="7">Skin secretion</tissue>
    </source>
</reference>
<reference key="3">
    <citation type="journal article" date="2000" name="Eur. J. Biochem.">
        <title>Structure-function relationships of temporins, small antimicrobial peptides from amphibian skin.</title>
        <authorList>
            <person name="Mangoni M.L."/>
            <person name="Rinaldi A.C."/>
            <person name="Di Giulio A."/>
            <person name="Mignogna G."/>
            <person name="Bozzi A."/>
            <person name="Barra D."/>
            <person name="Simmaco M."/>
        </authorList>
    </citation>
    <scope>FUNCTION</scope>
</reference>
<evidence type="ECO:0000250" key="1">
    <source>
        <dbReference type="UniProtKB" id="P56917"/>
    </source>
</evidence>
<evidence type="ECO:0000255" key="2"/>
<evidence type="ECO:0000256" key="3">
    <source>
        <dbReference type="SAM" id="MobiDB-lite"/>
    </source>
</evidence>
<evidence type="ECO:0000269" key="4">
    <source>
    </source>
</evidence>
<evidence type="ECO:0000269" key="5">
    <source>
    </source>
</evidence>
<evidence type="ECO:0000269" key="6">
    <source>
    </source>
</evidence>
<evidence type="ECO:0000303" key="7">
    <source>
    </source>
</evidence>
<evidence type="ECO:0000303" key="8">
    <source>
    </source>
</evidence>
<evidence type="ECO:0000305" key="9"/>
<evidence type="ECO:0000305" key="10">
    <source>
    </source>
</evidence>
<evidence type="ECO:0000305" key="11">
    <source>
    </source>
</evidence>
<accession>P79876</accession>
<accession>P56922</accession>
<protein>
    <recommendedName>
        <fullName evidence="1">Temporin-1Th</fullName>
        <shortName evidence="1">TH</shortName>
    </recommendedName>
    <alternativeName>
        <fullName evidence="8">Temporin-H</fullName>
    </alternativeName>
</protein>